<evidence type="ECO:0000250" key="1"/>
<evidence type="ECO:0000250" key="2">
    <source>
        <dbReference type="UniProtKB" id="Q9IZK2"/>
    </source>
</evidence>
<evidence type="ECO:0000255" key="3"/>
<evidence type="ECO:0000305" key="4"/>
<comment type="function">
    <text>Non-essential glycosyltransferase that can synthesize all known mucin beta 6 N-acetylglucosaminides. Mediates core 2 and core 4 O-glycan branching, 2 important steps in mucin-type biosynthesis. Has also I-branching enzyme activity by converting linear into branched poly-N-acetyllactosaminoglycans. Contributes to the post-translational modifications of structural proteins.</text>
</comment>
<comment type="catalytic activity">
    <reaction evidence="2">
        <text>a 3-O-[beta-D-galactosyl-(1-&gt;3)-N-acetyl-alpha-D-galactosaminyl]-L-seryl-[protein] + UDP-N-acetyl-alpha-D-glucosamine = 3-O-{beta-D-galactosyl-(1-&gt;3)-[N-acetyl-beta-D-glucosaminyl-(1-&gt;6)]-N-acetyl-alpha-D-galactosaminyl}-L-seryl-[protein] + UDP + H(+)</text>
        <dbReference type="Rhea" id="RHEA:56212"/>
        <dbReference type="Rhea" id="RHEA-COMP:13922"/>
        <dbReference type="Rhea" id="RHEA-COMP:14419"/>
        <dbReference type="ChEBI" id="CHEBI:15378"/>
        <dbReference type="ChEBI" id="CHEBI:57705"/>
        <dbReference type="ChEBI" id="CHEBI:58223"/>
        <dbReference type="ChEBI" id="CHEBI:137949"/>
        <dbReference type="ChEBI" id="CHEBI:139605"/>
        <dbReference type="EC" id="2.4.1.102"/>
    </reaction>
</comment>
<comment type="catalytic activity">
    <reaction evidence="2">
        <text>a 3-O-[beta-D-galactosyl-(1-&gt;3)-N-acetyl-alpha-D-galactosaminyl]-L-threonyl-[protein] + UDP-N-acetyl-alpha-D-glucosamine = a 3-O-{beta-D-galactosyl-(1-&gt;3)-[N-acetyl-beta-D-glucosaminyl-(1-&gt;6)]-N-acetyl-alpha-D-galactosaminyl}-L-threonyl-[protein] + UDP + H(+)</text>
        <dbReference type="Rhea" id="RHEA:56216"/>
        <dbReference type="Rhea" id="RHEA-COMP:13923"/>
        <dbReference type="Rhea" id="RHEA-COMP:14420"/>
        <dbReference type="ChEBI" id="CHEBI:15378"/>
        <dbReference type="ChEBI" id="CHEBI:57705"/>
        <dbReference type="ChEBI" id="CHEBI:58223"/>
        <dbReference type="ChEBI" id="CHEBI:137950"/>
        <dbReference type="ChEBI" id="CHEBI:139607"/>
        <dbReference type="EC" id="2.4.1.102"/>
    </reaction>
</comment>
<comment type="catalytic activity">
    <reaction evidence="2">
        <text>a beta-D-Gal-(1-&gt;4)-beta-D-GlcNAc-(1-&gt;3)-beta-D-Gal-(1-&gt;4)-beta-D-GlcNAc derivative + UDP-N-acetyl-alpha-D-glucosamine = a beta-D-Gal-(1-&gt;4)-beta-D-GlcNAc-(1-&gt;3)-[beta-D-GlcNAc-(1-&gt;6)]-beta-D-Gal-(1-&gt;4)-N-acetyl-beta-D-glucosaminyl derivative + UDP + H(+)</text>
        <dbReference type="Rhea" id="RHEA:54820"/>
        <dbReference type="ChEBI" id="CHEBI:15378"/>
        <dbReference type="ChEBI" id="CHEBI:57705"/>
        <dbReference type="ChEBI" id="CHEBI:58223"/>
        <dbReference type="ChEBI" id="CHEBI:138371"/>
        <dbReference type="ChEBI" id="CHEBI:138372"/>
        <dbReference type="EC" id="2.4.1.150"/>
    </reaction>
</comment>
<comment type="catalytic activity">
    <reaction evidence="2">
        <text>3-O-[N-acetyl-beta-D-glucosaminyl-(1-&gt;3)-N-acetyl-alpha-D-galactosaminyl]-L-seryl-[protein] + UDP-N-acetyl-alpha-D-glucosamine = 3-O-[N-acetyl-beta-D-glucosaminyl-(1-&gt;3)-[N-acetyl-beta-D-glucosaminyl-(1-&gt;6)]-N-acetyl-alpha-D-galactosaminyl]-L-seryl-[protein] + UDP + H(+)</text>
        <dbReference type="Rhea" id="RHEA:56188"/>
        <dbReference type="Rhea" id="RHEA-COMP:11691"/>
        <dbReference type="Rhea" id="RHEA-COMP:14412"/>
        <dbReference type="ChEBI" id="CHEBI:15378"/>
        <dbReference type="ChEBI" id="CHEBI:57705"/>
        <dbReference type="ChEBI" id="CHEBI:58223"/>
        <dbReference type="ChEBI" id="CHEBI:87079"/>
        <dbReference type="ChEBI" id="CHEBI:139581"/>
        <dbReference type="EC" id="2.4.1.148"/>
    </reaction>
</comment>
<comment type="catalytic activity">
    <reaction evidence="2">
        <text>a 3-O-[N-acetyl-beta-D-glucosaminyl-(1-&gt;3)-N-acetyl-alpha-D-galactosaminyl]-L-threonyl-[protein] + UDP-N-acetyl-alpha-D-glucosamine = 3-O-[N-acetyl-beta-D-glucosaminyl-(1-&gt;3)-[N-acetyl-beta-D-glucosaminyl-(1-&gt;6)]-N-acetyl-alpha-D-galactosaminyl]-L-threonyl-[protein] + UDP + H(+)</text>
        <dbReference type="Rhea" id="RHEA:56192"/>
        <dbReference type="Rhea" id="RHEA-COMP:11692"/>
        <dbReference type="Rhea" id="RHEA-COMP:14413"/>
        <dbReference type="ChEBI" id="CHEBI:15378"/>
        <dbReference type="ChEBI" id="CHEBI:57705"/>
        <dbReference type="ChEBI" id="CHEBI:58223"/>
        <dbReference type="ChEBI" id="CHEBI:87080"/>
        <dbReference type="ChEBI" id="CHEBI:139580"/>
        <dbReference type="EC" id="2.4.1.148"/>
    </reaction>
</comment>
<comment type="pathway">
    <text>Protein modification; protein glycosylation.</text>
</comment>
<comment type="subcellular location">
    <subcellularLocation>
        <location evidence="1">Host Golgi apparatus membrane</location>
        <topology evidence="1">Single-pass type II membrane protein</topology>
    </subcellularLocation>
</comment>
<comment type="developmental stage">
    <text>Expressed during BHV-4 replication (at protein level).</text>
</comment>
<comment type="miscellaneous">
    <text>Was acquired from an ancestor of the African buffalo around 1.5 million years ago.</text>
</comment>
<comment type="similarity">
    <text evidence="4">Belongs to the glycosyltransferase 14 family.</text>
</comment>
<organism>
    <name type="scientific">Bovine herpesvirus 4 (strain LVR140)</name>
    <name type="common">BoHV-4</name>
    <name type="synonym">Movar virus</name>
    <dbReference type="NCBI Taxonomy" id="436506"/>
    <lineage>
        <taxon>Viruses</taxon>
        <taxon>Duplodnaviria</taxon>
        <taxon>Heunggongvirae</taxon>
        <taxon>Peploviricota</taxon>
        <taxon>Herviviricetes</taxon>
        <taxon>Herpesvirales</taxon>
        <taxon>Orthoherpesviridae</taxon>
        <taxon>Gammaherpesvirinae</taxon>
        <taxon>Rhadinovirus</taxon>
        <taxon>Rhadinovirus bovinegamma4</taxon>
    </lineage>
</organism>
<sequence>MKMAGWKKKLCPGHHLWALGCYMLLAVVSLRLSLRFKCDVDSLDLESRDFQSQHCRDMLYNSLKLPAKRSINCSGITRGDQEAVVQALLDNLEVKKKRPPLTDTYYLNITRDCERFKAQRKFIQFPLSKEELDFPIAYSMVVHEKIENFERLLRAVYAPQNIYCVHVDVKSPETFKEAVKAIISCFPNVFMASKLVPVVYASWSRVQADLNCMEDLLQSSVSWKYLLNTCGTDFPIKTNAEMVLALKMLKGKNSMESEVPSESKKNRWKYRYEVTDTLYPTSKMKDPPPDNLPMFTGNAYFVASRAFVQHVLDNPKSQILVEWVKDTYSPDEHLWATLQRAPWMPGSVPSHPKYHISDMTAIARLVKWQYHEGDVSMGAPYAPCSGIHRRAICIYGAGDLYWILQNHHLLANKFDPRVDDNVLQCLEEYLRHKAIYGTEL</sequence>
<gene>
    <name type="primary">Bo17</name>
</gene>
<feature type="chain" id="PRO_0000288553" description="Beta-1,3-galactosyl-O-glycosyl-glycoprotein beta-1,6-N-acetylglucosaminyltransferase">
    <location>
        <begin position="1"/>
        <end position="440"/>
    </location>
</feature>
<feature type="topological domain" description="Cytoplasmic" evidence="3">
    <location>
        <begin position="1"/>
        <end position="9"/>
    </location>
</feature>
<feature type="transmembrane region" description="Helical; Signal-anchor for type II membrane protein" evidence="3">
    <location>
        <begin position="10"/>
        <end position="30"/>
    </location>
</feature>
<feature type="topological domain" description="Lumenal" evidence="3">
    <location>
        <begin position="31"/>
        <end position="440"/>
    </location>
</feature>
<feature type="glycosylation site" description="N-linked (GlcNAc...) asparagine; by host" evidence="3">
    <location>
        <position position="72"/>
    </location>
</feature>
<feature type="glycosylation site" description="N-linked (GlcNAc...) asparagine; by host" evidence="3">
    <location>
        <position position="108"/>
    </location>
</feature>
<feature type="disulfide bond" evidence="1">
    <location>
        <begin position="73"/>
        <end position="230"/>
    </location>
</feature>
<feature type="disulfide bond" evidence="1">
    <location>
        <begin position="164"/>
        <end position="384"/>
    </location>
</feature>
<feature type="disulfide bond" evidence="1">
    <location>
        <begin position="185"/>
        <end position="212"/>
    </location>
</feature>
<feature type="disulfide bond" evidence="1">
    <location>
        <begin position="393"/>
        <end position="425"/>
    </location>
</feature>
<dbReference type="EC" id="2.4.1.102" evidence="2"/>
<dbReference type="EC" id="2.4.1.148" evidence="2"/>
<dbReference type="EC" id="2.4.1.150" evidence="2"/>
<dbReference type="EMBL" id="AF465330">
    <property type="protein sequence ID" value="AAO22157.1"/>
    <property type="molecule type" value="Genomic_DNA"/>
</dbReference>
<dbReference type="EMBL" id="AF465331">
    <property type="protein sequence ID" value="AAO22158.1"/>
    <property type="molecule type" value="Genomic_DNA"/>
</dbReference>
<dbReference type="SMR" id="Q805R1"/>
<dbReference type="CAZy" id="GT14">
    <property type="family name" value="Glycosyltransferase Family 14"/>
</dbReference>
<dbReference type="GlyCosmos" id="Q805R1">
    <property type="glycosylation" value="2 sites, No reported glycans"/>
</dbReference>
<dbReference type="UniPathway" id="UPA00378"/>
<dbReference type="GO" id="GO:0044178">
    <property type="term" value="C:host cell Golgi membrane"/>
    <property type="evidence" value="ECO:0007669"/>
    <property type="project" value="UniProtKB-SubCell"/>
</dbReference>
<dbReference type="GO" id="GO:0016020">
    <property type="term" value="C:membrane"/>
    <property type="evidence" value="ECO:0007669"/>
    <property type="project" value="UniProtKB-KW"/>
</dbReference>
<dbReference type="GO" id="GO:0047225">
    <property type="term" value="F:acetylgalactosaminyl-O-glycosyl-glycoprotein beta-1,6-N-acetylglucosaminyltransferase activity"/>
    <property type="evidence" value="ECO:0007669"/>
    <property type="project" value="UniProtKB-EC"/>
</dbReference>
<dbReference type="GO" id="GO:0003829">
    <property type="term" value="F:beta-1,3-galactosyl-O-glycosyl-glycoprotein beta-1,6-N-acetylglucosaminyltransferase activity"/>
    <property type="evidence" value="ECO:0007669"/>
    <property type="project" value="UniProtKB-EC"/>
</dbReference>
<dbReference type="GO" id="GO:0008109">
    <property type="term" value="F:N-acetyllactosaminide beta-1,6-N-acetylglucosaminyltransferase activity"/>
    <property type="evidence" value="ECO:0007669"/>
    <property type="project" value="UniProtKB-EC"/>
</dbReference>
<dbReference type="GO" id="GO:0006486">
    <property type="term" value="P:protein glycosylation"/>
    <property type="evidence" value="ECO:0007669"/>
    <property type="project" value="UniProtKB-UniPathway"/>
</dbReference>
<dbReference type="InterPro" id="IPR003406">
    <property type="entry name" value="Glyco_trans_14"/>
</dbReference>
<dbReference type="PANTHER" id="PTHR19297:SF81">
    <property type="entry name" value="BETA-1,3-GALACTOSYL-O-GLYCOSYL-GLYCOPROTEIN BETA-1,6-N-ACETYLGLUCOSAMINYLTRANSFERASE 3"/>
    <property type="match status" value="1"/>
</dbReference>
<dbReference type="PANTHER" id="PTHR19297">
    <property type="entry name" value="GLYCOSYLTRANSFERASE 14 FAMILY MEMBER"/>
    <property type="match status" value="1"/>
</dbReference>
<dbReference type="Pfam" id="PF02485">
    <property type="entry name" value="Branch"/>
    <property type="match status" value="1"/>
</dbReference>
<name>GCNT3_BHV4L</name>
<protein>
    <recommendedName>
        <fullName>Beta-1,3-galactosyl-O-glycosyl-glycoprotein beta-1,6-N-acetylglucosaminyltransferase</fullName>
        <ecNumber evidence="2">2.4.1.102</ecNumber>
        <ecNumber evidence="2">2.4.1.148</ecNumber>
        <ecNumber evidence="2">2.4.1.150</ecNumber>
    </recommendedName>
    <alternativeName>
        <fullName>C2GnT-mucin type</fullName>
        <shortName>C2GnT-M</shortName>
    </alternativeName>
</protein>
<organismHost>
    <name type="scientific">Bos taurus</name>
    <name type="common">Bovine</name>
    <dbReference type="NCBI Taxonomy" id="9913"/>
</organismHost>
<proteinExistence type="evidence at protein level"/>
<keyword id="KW-1015">Disulfide bond</keyword>
<keyword id="KW-0325">Glycoprotein</keyword>
<keyword id="KW-0328">Glycosyltransferase</keyword>
<keyword id="KW-1040">Host Golgi apparatus</keyword>
<keyword id="KW-1043">Host membrane</keyword>
<keyword id="KW-0472">Membrane</keyword>
<keyword id="KW-0735">Signal-anchor</keyword>
<keyword id="KW-0808">Transferase</keyword>
<keyword id="KW-0812">Transmembrane</keyword>
<keyword id="KW-1133">Transmembrane helix</keyword>
<reference key="1">
    <citation type="journal article" date="2003" name="J. Virol.">
        <title>The core 2 beta-1,6-N-acetylglucosaminyltransferase-mucin encoded by bovine herpesvirus 4 was acquired from an ancestor of the African buffalo.</title>
        <authorList>
            <person name="Markine-Goriaynoff N."/>
            <person name="Georgin J.-P."/>
            <person name="Goltz M."/>
            <person name="Zimmermann W."/>
            <person name="Broll H."/>
            <person name="Wamwayi H.M."/>
            <person name="Pastoret P.-P."/>
            <person name="Sharp P.M."/>
            <person name="Vanderplasschen A."/>
        </authorList>
    </citation>
    <scope>NUCLEOTIDE SEQUENCE [GENOMIC DNA]</scope>
</reference>
<accession>Q805R1</accession>